<organism>
    <name type="scientific">Campylobacter jejuni subsp. doylei (strain ATCC BAA-1458 / RM4099 / 269.97)</name>
    <dbReference type="NCBI Taxonomy" id="360109"/>
    <lineage>
        <taxon>Bacteria</taxon>
        <taxon>Pseudomonadati</taxon>
        <taxon>Campylobacterota</taxon>
        <taxon>Epsilonproteobacteria</taxon>
        <taxon>Campylobacterales</taxon>
        <taxon>Campylobacteraceae</taxon>
        <taxon>Campylobacter</taxon>
    </lineage>
</organism>
<gene>
    <name evidence="1" type="primary">dnaA</name>
    <name type="ordered locus">JJD26997_0001</name>
</gene>
<sequence>MNPSQILENLKKELNENEYENYLSNLKFNEKQSKADLLVFNAPNELMAKFIQTKYGKKIAHFYEVQSGNKAIINIQAQSTKQSNKSTKIDIAHIQAQSTILNPSFTFESFVVGDSNKYAYGACKAIAHKDKLGKLYNPIFVYGPTGLGKTHLLQAVGNASLEMGKKVIYATSENFINDFTSNLKNGSLDKFHEKYRNCDVLLIDDVQFLGKTDKIQEEFFFIFNEIKNNDGQIIMTSDNPPNMLKGITERLKSRFAHGIIADITPPQLDTKIAIIRKKCEFNDINLSNDIINYIATSLGDNIREIEGIIISLNAYATILGQEITLELAKSVMKDHIKEKKENITIDDILSLVCKEFNIKPSDVKSNKKTQNIVTARRIVIYLARTLTALTMPQLANYFEMKDHTAISHNVKKITEMIENDTSLKAKIEELKNKILIKSQS</sequence>
<comment type="function">
    <text evidence="1">Plays an essential role in the initiation and regulation of chromosomal replication. ATP-DnaA binds to the origin of replication (oriC) to initiate formation of the DNA replication initiation complex once per cell cycle. Binds the DnaA box (a 9 base pair repeat at the origin) and separates the double-stranded (ds)DNA. Forms a right-handed helical filament on oriC DNA; dsDNA binds to the exterior of the filament while single-stranded (ss)DNA is stabiized in the filament's interior. The ATP-DnaA-oriC complex binds and stabilizes one strand of the AT-rich DNA unwinding element (DUE), permitting loading of DNA polymerase. After initiation quickly degrades to an ADP-DnaA complex that is not apt for DNA replication. Binds acidic phospholipids.</text>
</comment>
<comment type="subunit">
    <text evidence="1">Oligomerizes as a right-handed, spiral filament on DNA at oriC.</text>
</comment>
<comment type="subcellular location">
    <subcellularLocation>
        <location evidence="1">Cytoplasm</location>
    </subcellularLocation>
</comment>
<comment type="domain">
    <text evidence="1">Domain I is involved in oligomerization and binding regulators, domain II is flexibile and of varying length in different bacteria, domain III forms the AAA+ region, while domain IV binds dsDNA.</text>
</comment>
<comment type="similarity">
    <text evidence="1">Belongs to the DnaA family.</text>
</comment>
<dbReference type="EMBL" id="CP000768">
    <property type="protein sequence ID" value="ABS43355.1"/>
    <property type="molecule type" value="Genomic_DNA"/>
</dbReference>
<dbReference type="SMR" id="A7H194"/>
<dbReference type="KEGG" id="cjd:JJD26997_0001"/>
<dbReference type="HOGENOM" id="CLU_026910_3_1_7"/>
<dbReference type="Proteomes" id="UP000002302">
    <property type="component" value="Chromosome"/>
</dbReference>
<dbReference type="GO" id="GO:0005737">
    <property type="term" value="C:cytoplasm"/>
    <property type="evidence" value="ECO:0007669"/>
    <property type="project" value="UniProtKB-SubCell"/>
</dbReference>
<dbReference type="GO" id="GO:0005886">
    <property type="term" value="C:plasma membrane"/>
    <property type="evidence" value="ECO:0007669"/>
    <property type="project" value="TreeGrafter"/>
</dbReference>
<dbReference type="GO" id="GO:0005524">
    <property type="term" value="F:ATP binding"/>
    <property type="evidence" value="ECO:0007669"/>
    <property type="project" value="UniProtKB-UniRule"/>
</dbReference>
<dbReference type="GO" id="GO:0016887">
    <property type="term" value="F:ATP hydrolysis activity"/>
    <property type="evidence" value="ECO:0007669"/>
    <property type="project" value="InterPro"/>
</dbReference>
<dbReference type="GO" id="GO:0003688">
    <property type="term" value="F:DNA replication origin binding"/>
    <property type="evidence" value="ECO:0007669"/>
    <property type="project" value="UniProtKB-UniRule"/>
</dbReference>
<dbReference type="GO" id="GO:0008289">
    <property type="term" value="F:lipid binding"/>
    <property type="evidence" value="ECO:0007669"/>
    <property type="project" value="UniProtKB-KW"/>
</dbReference>
<dbReference type="GO" id="GO:0006270">
    <property type="term" value="P:DNA replication initiation"/>
    <property type="evidence" value="ECO:0007669"/>
    <property type="project" value="UniProtKB-UniRule"/>
</dbReference>
<dbReference type="GO" id="GO:0006275">
    <property type="term" value="P:regulation of DNA replication"/>
    <property type="evidence" value="ECO:0007669"/>
    <property type="project" value="UniProtKB-UniRule"/>
</dbReference>
<dbReference type="CDD" id="cd00009">
    <property type="entry name" value="AAA"/>
    <property type="match status" value="1"/>
</dbReference>
<dbReference type="CDD" id="cd06571">
    <property type="entry name" value="Bac_DnaA_C"/>
    <property type="match status" value="1"/>
</dbReference>
<dbReference type="Gene3D" id="1.10.1750.10">
    <property type="match status" value="1"/>
</dbReference>
<dbReference type="Gene3D" id="1.10.8.60">
    <property type="match status" value="1"/>
</dbReference>
<dbReference type="Gene3D" id="3.30.300.180">
    <property type="match status" value="1"/>
</dbReference>
<dbReference type="Gene3D" id="3.40.50.300">
    <property type="entry name" value="P-loop containing nucleotide triphosphate hydrolases"/>
    <property type="match status" value="1"/>
</dbReference>
<dbReference type="HAMAP" id="MF_00377">
    <property type="entry name" value="DnaA_bact"/>
    <property type="match status" value="1"/>
</dbReference>
<dbReference type="InterPro" id="IPR003593">
    <property type="entry name" value="AAA+_ATPase"/>
</dbReference>
<dbReference type="InterPro" id="IPR001957">
    <property type="entry name" value="Chromosome_initiator_DnaA"/>
</dbReference>
<dbReference type="InterPro" id="IPR020591">
    <property type="entry name" value="Chromosome_initiator_DnaA-like"/>
</dbReference>
<dbReference type="InterPro" id="IPR018312">
    <property type="entry name" value="Chromosome_initiator_DnaA_CS"/>
</dbReference>
<dbReference type="InterPro" id="IPR013159">
    <property type="entry name" value="DnaA_C"/>
</dbReference>
<dbReference type="InterPro" id="IPR013317">
    <property type="entry name" value="DnaA_dom"/>
</dbReference>
<dbReference type="InterPro" id="IPR024633">
    <property type="entry name" value="DnaA_N_dom"/>
</dbReference>
<dbReference type="InterPro" id="IPR038454">
    <property type="entry name" value="DnaA_N_sf"/>
</dbReference>
<dbReference type="InterPro" id="IPR027417">
    <property type="entry name" value="P-loop_NTPase"/>
</dbReference>
<dbReference type="InterPro" id="IPR010921">
    <property type="entry name" value="Trp_repressor/repl_initiator"/>
</dbReference>
<dbReference type="NCBIfam" id="TIGR00362">
    <property type="entry name" value="DnaA"/>
    <property type="match status" value="1"/>
</dbReference>
<dbReference type="PANTHER" id="PTHR30050">
    <property type="entry name" value="CHROMOSOMAL REPLICATION INITIATOR PROTEIN DNAA"/>
    <property type="match status" value="1"/>
</dbReference>
<dbReference type="PANTHER" id="PTHR30050:SF2">
    <property type="entry name" value="CHROMOSOMAL REPLICATION INITIATOR PROTEIN DNAA"/>
    <property type="match status" value="1"/>
</dbReference>
<dbReference type="Pfam" id="PF00308">
    <property type="entry name" value="Bac_DnaA"/>
    <property type="match status" value="1"/>
</dbReference>
<dbReference type="Pfam" id="PF08299">
    <property type="entry name" value="Bac_DnaA_C"/>
    <property type="match status" value="1"/>
</dbReference>
<dbReference type="Pfam" id="PF11638">
    <property type="entry name" value="DnaA_N"/>
    <property type="match status" value="1"/>
</dbReference>
<dbReference type="PRINTS" id="PR00051">
    <property type="entry name" value="DNAA"/>
</dbReference>
<dbReference type="SMART" id="SM00382">
    <property type="entry name" value="AAA"/>
    <property type="match status" value="1"/>
</dbReference>
<dbReference type="SMART" id="SM00760">
    <property type="entry name" value="Bac_DnaA_C"/>
    <property type="match status" value="1"/>
</dbReference>
<dbReference type="SUPFAM" id="SSF52540">
    <property type="entry name" value="P-loop containing nucleoside triphosphate hydrolases"/>
    <property type="match status" value="1"/>
</dbReference>
<dbReference type="SUPFAM" id="SSF48295">
    <property type="entry name" value="TrpR-like"/>
    <property type="match status" value="1"/>
</dbReference>
<dbReference type="PROSITE" id="PS01008">
    <property type="entry name" value="DNAA"/>
    <property type="match status" value="1"/>
</dbReference>
<accession>A7H194</accession>
<protein>
    <recommendedName>
        <fullName evidence="1">Chromosomal replication initiator protein DnaA</fullName>
    </recommendedName>
</protein>
<keyword id="KW-0067">ATP-binding</keyword>
<keyword id="KW-0963">Cytoplasm</keyword>
<keyword id="KW-0235">DNA replication</keyword>
<keyword id="KW-0238">DNA-binding</keyword>
<keyword id="KW-0446">Lipid-binding</keyword>
<keyword id="KW-0547">Nucleotide-binding</keyword>
<reference key="1">
    <citation type="submission" date="2007-07" db="EMBL/GenBank/DDBJ databases">
        <title>Complete genome sequence of Campylobacter jejuni subsp doylei 269.97 isolated from human blood.</title>
        <authorList>
            <person name="Fouts D.E."/>
            <person name="Mongodin E.F."/>
            <person name="Puiu D."/>
            <person name="Sebastian Y."/>
            <person name="Miller W.G."/>
            <person name="Mandrell R.E."/>
            <person name="Lastovica A.J."/>
            <person name="Nelson K.E."/>
        </authorList>
    </citation>
    <scope>NUCLEOTIDE SEQUENCE [LARGE SCALE GENOMIC DNA]</scope>
    <source>
        <strain>ATCC BAA-1458 / RM4099 / 269.97</strain>
    </source>
</reference>
<name>DNAA_CAMJD</name>
<evidence type="ECO:0000255" key="1">
    <source>
        <dbReference type="HAMAP-Rule" id="MF_00377"/>
    </source>
</evidence>
<feature type="chain" id="PRO_1000048628" description="Chromosomal replication initiator protein DnaA">
    <location>
        <begin position="1"/>
        <end position="440"/>
    </location>
</feature>
<feature type="region of interest" description="Domain I, interacts with DnaA modulators" evidence="1">
    <location>
        <begin position="1"/>
        <end position="74"/>
    </location>
</feature>
<feature type="region of interest" description="Domain II" evidence="1">
    <location>
        <begin position="74"/>
        <end position="99"/>
    </location>
</feature>
<feature type="region of interest" description="Domain III, AAA+ region" evidence="1">
    <location>
        <begin position="100"/>
        <end position="316"/>
    </location>
</feature>
<feature type="region of interest" description="Domain IV, binds dsDNA" evidence="1">
    <location>
        <begin position="317"/>
        <end position="440"/>
    </location>
</feature>
<feature type="binding site" evidence="1">
    <location>
        <position position="146"/>
    </location>
    <ligand>
        <name>ATP</name>
        <dbReference type="ChEBI" id="CHEBI:30616"/>
    </ligand>
</feature>
<feature type="binding site" evidence="1">
    <location>
        <position position="148"/>
    </location>
    <ligand>
        <name>ATP</name>
        <dbReference type="ChEBI" id="CHEBI:30616"/>
    </ligand>
</feature>
<feature type="binding site" evidence="1">
    <location>
        <position position="149"/>
    </location>
    <ligand>
        <name>ATP</name>
        <dbReference type="ChEBI" id="CHEBI:30616"/>
    </ligand>
</feature>
<feature type="binding site" evidence="1">
    <location>
        <position position="150"/>
    </location>
    <ligand>
        <name>ATP</name>
        <dbReference type="ChEBI" id="CHEBI:30616"/>
    </ligand>
</feature>
<proteinExistence type="inferred from homology"/>